<keyword id="KW-0002">3D-structure</keyword>
<keyword id="KW-0903">Direct protein sequencing</keyword>
<keyword id="KW-0456">Lyase</keyword>
<keyword id="KW-0501">Molybdenum cofactor biosynthesis</keyword>
<keyword id="KW-1185">Reference proteome</keyword>
<reference key="1">
    <citation type="journal article" date="1993" name="Mol. Microbiol.">
        <title>Molecular genetic analysis of the moa operon of Escherichia coli K-12 required for molybdenum cofactor biosynthesis.</title>
        <authorList>
            <person name="Rivers S.L."/>
            <person name="McNairn E."/>
            <person name="Blasco F."/>
            <person name="Giordano G."/>
            <person name="Boxer D.H."/>
        </authorList>
    </citation>
    <scope>NUCLEOTIDE SEQUENCE [GENOMIC DNA]</scope>
    <scope>PROTEIN SEQUENCE OF 2-11</scope>
    <source>
        <strain>K12 / MC4100 / ATCC 35695 / DSM 6574</strain>
    </source>
</reference>
<reference key="2">
    <citation type="journal article" date="1996" name="DNA Res.">
        <title>A 718-kb DNA sequence of the Escherichia coli K-12 genome corresponding to the 12.7-28.0 min region on the linkage map.</title>
        <authorList>
            <person name="Oshima T."/>
            <person name="Aiba H."/>
            <person name="Baba T."/>
            <person name="Fujita K."/>
            <person name="Hayashi K."/>
            <person name="Honjo A."/>
            <person name="Ikemoto K."/>
            <person name="Inada T."/>
            <person name="Itoh T."/>
            <person name="Kajihara M."/>
            <person name="Kanai K."/>
            <person name="Kashimoto K."/>
            <person name="Kimura S."/>
            <person name="Kitagawa M."/>
            <person name="Makino K."/>
            <person name="Masuda S."/>
            <person name="Miki T."/>
            <person name="Mizobuchi K."/>
            <person name="Mori H."/>
            <person name="Motomura K."/>
            <person name="Nakamura Y."/>
            <person name="Nashimoto H."/>
            <person name="Nishio Y."/>
            <person name="Saito N."/>
            <person name="Sampei G."/>
            <person name="Seki Y."/>
            <person name="Tagami H."/>
            <person name="Takemoto K."/>
            <person name="Wada C."/>
            <person name="Yamamoto Y."/>
            <person name="Yano M."/>
            <person name="Horiuchi T."/>
        </authorList>
    </citation>
    <scope>NUCLEOTIDE SEQUENCE [LARGE SCALE GENOMIC DNA]</scope>
    <source>
        <strain>K12 / W3110 / ATCC 27325 / DSM 5911</strain>
    </source>
</reference>
<reference key="3">
    <citation type="journal article" date="1997" name="Science">
        <title>The complete genome sequence of Escherichia coli K-12.</title>
        <authorList>
            <person name="Blattner F.R."/>
            <person name="Plunkett G. III"/>
            <person name="Bloch C.A."/>
            <person name="Perna N.T."/>
            <person name="Burland V."/>
            <person name="Riley M."/>
            <person name="Collado-Vides J."/>
            <person name="Glasner J.D."/>
            <person name="Rode C.K."/>
            <person name="Mayhew G.F."/>
            <person name="Gregor J."/>
            <person name="Davis N.W."/>
            <person name="Kirkpatrick H.A."/>
            <person name="Goeden M.A."/>
            <person name="Rose D.J."/>
            <person name="Mau B."/>
            <person name="Shao Y."/>
        </authorList>
    </citation>
    <scope>NUCLEOTIDE SEQUENCE [LARGE SCALE GENOMIC DNA]</scope>
    <source>
        <strain>K12 / MG1655 / ATCC 47076</strain>
    </source>
</reference>
<reference key="4">
    <citation type="journal article" date="2006" name="Mol. Syst. Biol.">
        <title>Highly accurate genome sequences of Escherichia coli K-12 strains MG1655 and W3110.</title>
        <authorList>
            <person name="Hayashi K."/>
            <person name="Morooka N."/>
            <person name="Yamamoto Y."/>
            <person name="Fujita K."/>
            <person name="Isono K."/>
            <person name="Choi S."/>
            <person name="Ohtsubo E."/>
            <person name="Baba T."/>
            <person name="Wanner B.L."/>
            <person name="Mori H."/>
            <person name="Horiuchi T."/>
        </authorList>
    </citation>
    <scope>NUCLEOTIDE SEQUENCE [LARGE SCALE GENOMIC DNA]</scope>
    <source>
        <strain>K12 / W3110 / ATCC 27325 / DSM 5911</strain>
    </source>
</reference>
<reference key="5">
    <citation type="journal article" date="2000" name="Structure">
        <title>Insights into molybdenum cofactor deficiency provided by the crystal structure of the molybdenum cofactor biosynthesis protein MoaC.</title>
        <authorList>
            <person name="Wuebbens M.M."/>
            <person name="Liu M.T.W."/>
            <person name="Rajagopalan K.V."/>
            <person name="Schindelin H."/>
        </authorList>
    </citation>
    <scope>X-RAY CRYSTALLOGRAPHY (2.0 ANGSTROMS)</scope>
</reference>
<reference key="6">
    <citation type="journal article" date="2015" name="Proc. Natl. Acad. Sci. U.S.A.">
        <title>Mechanism of pyranopterin ring formation in molybdenum cofactor biosynthesis.</title>
        <authorList>
            <person name="Hover B.M."/>
            <person name="Tonthat N.K."/>
            <person name="Schumacher M.A."/>
            <person name="Yokoyama K."/>
        </authorList>
    </citation>
    <scope>X-RAY CRYSTALLOGRAPHY (1.79 ANGSTROMS) OF 3-161 IN COMPLEX WITH (8S)-3',8-CYCLO-7,8-DIHYDROGUANOSINE 5'-TRIPHOSPHATE</scope>
    <scope>FUNCTION</scope>
    <scope>CATALYTIC ACTIVITY</scope>
    <scope>MUTAGENESIS OF ASP-17; LYS-21; ARG-26; LYS-51; HIS-77; GLU-112; GLU-114; ASP-128; LYS-131 AND LYS-147</scope>
    <scope>BIOPHYSICOCHEMICAL PROPERTIES</scope>
    <scope>REACTION MECHANISM</scope>
</reference>
<sequence>MSQLTHINAAGEAHMVDVSAKAETVREARAEAFVTMRSETLAMIIDGRHHKGDVFATARIAGIQAAKRTWDLIPLCHPLMLSKVEVNLQAEPEHNRVRIETLCRLTGKTGVEMEALTAASVAALTIYDMCKAVQKDMVIGPVRLLAKSGGKSGDFKVEADD</sequence>
<name>MOAC_ECOLI</name>
<accession>P0A738</accession>
<accession>P30747</accession>
<accession>P77530</accession>
<gene>
    <name type="primary">moaC</name>
    <name type="synonym">chlA3</name>
    <name type="ordered locus">b0783</name>
    <name type="ordered locus">JW0766</name>
</gene>
<organism>
    <name type="scientific">Escherichia coli (strain K12)</name>
    <dbReference type="NCBI Taxonomy" id="83333"/>
    <lineage>
        <taxon>Bacteria</taxon>
        <taxon>Pseudomonadati</taxon>
        <taxon>Pseudomonadota</taxon>
        <taxon>Gammaproteobacteria</taxon>
        <taxon>Enterobacterales</taxon>
        <taxon>Enterobacteriaceae</taxon>
        <taxon>Escherichia</taxon>
    </lineage>
</organism>
<dbReference type="EC" id="4.6.1.17" evidence="1 3"/>
<dbReference type="EMBL" id="X70420">
    <property type="protein sequence ID" value="CAA49863.1"/>
    <property type="molecule type" value="Genomic_DNA"/>
</dbReference>
<dbReference type="EMBL" id="U00096">
    <property type="protein sequence ID" value="AAC73870.1"/>
    <property type="molecule type" value="Genomic_DNA"/>
</dbReference>
<dbReference type="EMBL" id="AP009048">
    <property type="protein sequence ID" value="BAA35441.1"/>
    <property type="molecule type" value="Genomic_DNA"/>
</dbReference>
<dbReference type="PIR" id="G64814">
    <property type="entry name" value="G64814"/>
</dbReference>
<dbReference type="RefSeq" id="NP_415304.1">
    <property type="nucleotide sequence ID" value="NC_000913.3"/>
</dbReference>
<dbReference type="RefSeq" id="WP_000080885.1">
    <property type="nucleotide sequence ID" value="NZ_STEB01000028.1"/>
</dbReference>
<dbReference type="PDB" id="1EKR">
    <property type="method" value="X-ray"/>
    <property type="resolution" value="2.00 A"/>
    <property type="chains" value="A=1-161"/>
</dbReference>
<dbReference type="PDB" id="1EKS">
    <property type="method" value="X-ray"/>
    <property type="resolution" value="2.50 A"/>
    <property type="chains" value="A=1-161"/>
</dbReference>
<dbReference type="PDB" id="4PYA">
    <property type="method" value="X-ray"/>
    <property type="resolution" value="1.79 A"/>
    <property type="chains" value="A=3-161"/>
</dbReference>
<dbReference type="PDB" id="4PYD">
    <property type="method" value="X-ray"/>
    <property type="resolution" value="3.19 A"/>
    <property type="chains" value="A/B/C/D/E/F=1-161"/>
</dbReference>
<dbReference type="PDBsum" id="1EKR"/>
<dbReference type="PDBsum" id="1EKS"/>
<dbReference type="PDBsum" id="4PYA"/>
<dbReference type="PDBsum" id="4PYD"/>
<dbReference type="SMR" id="P0A738"/>
<dbReference type="BioGRID" id="4262176">
    <property type="interactions" value="65"/>
</dbReference>
<dbReference type="DIP" id="DIP-10230N"/>
<dbReference type="FunCoup" id="P0A738">
    <property type="interactions" value="531"/>
</dbReference>
<dbReference type="IntAct" id="P0A738">
    <property type="interactions" value="20"/>
</dbReference>
<dbReference type="STRING" id="511145.b0783"/>
<dbReference type="jPOST" id="P0A738"/>
<dbReference type="PaxDb" id="511145-b0783"/>
<dbReference type="EnsemblBacteria" id="AAC73870">
    <property type="protein sequence ID" value="AAC73870"/>
    <property type="gene ID" value="b0783"/>
</dbReference>
<dbReference type="GeneID" id="86945666"/>
<dbReference type="GeneID" id="945397"/>
<dbReference type="KEGG" id="ecj:JW0766"/>
<dbReference type="KEGG" id="eco:b0783"/>
<dbReference type="KEGG" id="ecoc:C3026_04965"/>
<dbReference type="PATRIC" id="fig|1411691.4.peg.1495"/>
<dbReference type="EchoBASE" id="EB1617"/>
<dbReference type="eggNOG" id="COG0315">
    <property type="taxonomic scope" value="Bacteria"/>
</dbReference>
<dbReference type="HOGENOM" id="CLU_074693_1_1_6"/>
<dbReference type="InParanoid" id="P0A738"/>
<dbReference type="OMA" id="IWDMVKS"/>
<dbReference type="OrthoDB" id="9794429at2"/>
<dbReference type="PhylomeDB" id="P0A738"/>
<dbReference type="BioCyc" id="EcoCyc:EG11666-MONOMER"/>
<dbReference type="BioCyc" id="MetaCyc:EG11666-MONOMER"/>
<dbReference type="BRENDA" id="4.6.1.17">
    <property type="organism ID" value="2026"/>
</dbReference>
<dbReference type="UniPathway" id="UPA00344"/>
<dbReference type="EvolutionaryTrace" id="P0A738"/>
<dbReference type="PRO" id="PR:P0A738"/>
<dbReference type="Proteomes" id="UP000000625">
    <property type="component" value="Chromosome"/>
</dbReference>
<dbReference type="GO" id="GO:0032991">
    <property type="term" value="C:protein-containing complex"/>
    <property type="evidence" value="ECO:0000314"/>
    <property type="project" value="EcoCyc"/>
</dbReference>
<dbReference type="GO" id="GO:0061799">
    <property type="term" value="F:cyclic pyranopterin monophosphate synthase activity"/>
    <property type="evidence" value="ECO:0000314"/>
    <property type="project" value="EcoCyc"/>
</dbReference>
<dbReference type="GO" id="GO:0042802">
    <property type="term" value="F:identical protein binding"/>
    <property type="evidence" value="ECO:0000314"/>
    <property type="project" value="EcoCyc"/>
</dbReference>
<dbReference type="GO" id="GO:0006777">
    <property type="term" value="P:Mo-molybdopterin cofactor biosynthetic process"/>
    <property type="evidence" value="ECO:0000315"/>
    <property type="project" value="EcoCyc"/>
</dbReference>
<dbReference type="CDD" id="cd01420">
    <property type="entry name" value="MoaC_PE"/>
    <property type="match status" value="1"/>
</dbReference>
<dbReference type="FunFam" id="3.30.70.640:FF:000001">
    <property type="entry name" value="Cyclic pyranopterin monophosphate synthase"/>
    <property type="match status" value="1"/>
</dbReference>
<dbReference type="Gene3D" id="3.30.70.640">
    <property type="entry name" value="Molybdopterin cofactor biosynthesis C (MoaC) domain"/>
    <property type="match status" value="1"/>
</dbReference>
<dbReference type="HAMAP" id="MF_01224_B">
    <property type="entry name" value="MoaC_B"/>
    <property type="match status" value="1"/>
</dbReference>
<dbReference type="InterPro" id="IPR023045">
    <property type="entry name" value="MoaC"/>
</dbReference>
<dbReference type="InterPro" id="IPR047594">
    <property type="entry name" value="MoaC_bact/euk"/>
</dbReference>
<dbReference type="InterPro" id="IPR036522">
    <property type="entry name" value="MoaC_sf"/>
</dbReference>
<dbReference type="InterPro" id="IPR050105">
    <property type="entry name" value="MoCo_biosynth_MoaA/MoaC"/>
</dbReference>
<dbReference type="InterPro" id="IPR002820">
    <property type="entry name" value="Mopterin_CF_biosynth-C_dom"/>
</dbReference>
<dbReference type="NCBIfam" id="TIGR00581">
    <property type="entry name" value="moaC"/>
    <property type="match status" value="1"/>
</dbReference>
<dbReference type="NCBIfam" id="NF006870">
    <property type="entry name" value="PRK09364.1"/>
    <property type="match status" value="1"/>
</dbReference>
<dbReference type="PANTHER" id="PTHR22960">
    <property type="entry name" value="MOLYBDOPTERIN COFACTOR SYNTHESIS PROTEIN A"/>
    <property type="match status" value="1"/>
</dbReference>
<dbReference type="Pfam" id="PF01967">
    <property type="entry name" value="MoaC"/>
    <property type="match status" value="1"/>
</dbReference>
<dbReference type="SUPFAM" id="SSF55040">
    <property type="entry name" value="Molybdenum cofactor biosynthesis protein C, MoaC"/>
    <property type="match status" value="1"/>
</dbReference>
<feature type="initiator methionine" description="Removed" evidence="4">
    <location>
        <position position="1"/>
    </location>
</feature>
<feature type="chain" id="PRO_0000097798" description="Cyclic pyranopterin monophosphate synthase">
    <location>
        <begin position="2"/>
        <end position="161"/>
    </location>
</feature>
<feature type="active site" evidence="1">
    <location>
        <position position="128"/>
    </location>
</feature>
<feature type="binding site" evidence="1 3">
    <location>
        <begin position="75"/>
        <end position="77"/>
    </location>
    <ligand>
        <name>substrate</name>
    </ligand>
</feature>
<feature type="binding site" evidence="1 3">
    <location>
        <begin position="113"/>
        <end position="114"/>
    </location>
    <ligand>
        <name>substrate</name>
    </ligand>
</feature>
<feature type="mutagenesis site" description="Loss of activity by 70%." evidence="3">
    <original>D</original>
    <variation>A</variation>
    <location>
        <position position="17"/>
    </location>
</feature>
<feature type="mutagenesis site" description="Loss of activity by 85%." evidence="3">
    <original>K</original>
    <variation>A</variation>
    <location>
        <position position="21"/>
    </location>
</feature>
<feature type="mutagenesis site" description="Loss of activity by 80%." evidence="3">
    <original>R</original>
    <variation>A</variation>
    <location>
        <position position="26"/>
    </location>
</feature>
<feature type="mutagenesis site" description="Complete loss of activity." evidence="3">
    <original>K</original>
    <variation>A</variation>
    <location>
        <position position="51"/>
    </location>
</feature>
<feature type="mutagenesis site" description="Reduced activity." evidence="2">
    <original>G</original>
    <variation>A</variation>
    <location>
        <position position="52"/>
    </location>
</feature>
<feature type="mutagenesis site" description="Reduced activity." evidence="2">
    <original>K</original>
    <variation>A</variation>
    <location>
        <position position="67"/>
    </location>
</feature>
<feature type="mutagenesis site" description="Reduced activity." evidence="2">
    <original>C</original>
    <variation>A</variation>
    <location>
        <position position="76"/>
    </location>
</feature>
<feature type="mutagenesis site" description="Complete loss of activity." evidence="3">
    <original>H</original>
    <variation>A</variation>
    <location>
        <position position="77"/>
    </location>
</feature>
<feature type="mutagenesis site" description="Complete loss of activity." evidence="3">
    <original>E</original>
    <variation>A</variation>
    <location>
        <position position="112"/>
    </location>
</feature>
<feature type="mutagenesis site" description="Loss of activity." evidence="3">
    <original>E</original>
    <variation>A</variation>
    <location>
        <position position="114"/>
    </location>
</feature>
<feature type="mutagenesis site" description="Complete loss of activity." evidence="3">
    <original>D</original>
    <variation>A</variation>
    <location>
        <position position="128"/>
    </location>
</feature>
<feature type="mutagenesis site" description="Complete loss of activity." evidence="3">
    <original>K</original>
    <variation>A</variation>
    <location>
        <position position="131"/>
    </location>
</feature>
<feature type="mutagenesis site" description="Loss of activity by 90%." evidence="3">
    <original>K</original>
    <variation>A</variation>
    <location>
        <position position="147"/>
    </location>
</feature>
<feature type="sequence conflict" description="In Ref. 1; CAA49863." evidence="5" ref="1">
    <original>D</original>
    <variation>N</variation>
    <location>
        <position position="17"/>
    </location>
</feature>
<feature type="sequence conflict" description="In Ref. 1; CAA49863." evidence="5" ref="1">
    <original>PEHNRV</original>
    <variation>RAQSG</variation>
    <location>
        <begin position="92"/>
        <end position="97"/>
    </location>
</feature>
<feature type="strand" evidence="6">
    <location>
        <begin position="19"/>
        <end position="21"/>
    </location>
</feature>
<feature type="strand" evidence="7">
    <location>
        <begin position="24"/>
        <end position="35"/>
    </location>
</feature>
<feature type="helix" evidence="7">
    <location>
        <begin position="38"/>
        <end position="46"/>
    </location>
</feature>
<feature type="turn" evidence="7">
    <location>
        <begin position="47"/>
        <end position="49"/>
    </location>
</feature>
<feature type="strand" evidence="6">
    <location>
        <begin position="50"/>
        <end position="52"/>
    </location>
</feature>
<feature type="helix" evidence="7">
    <location>
        <begin position="54"/>
        <end position="67"/>
    </location>
</feature>
<feature type="helix" evidence="7">
    <location>
        <begin position="69"/>
        <end position="72"/>
    </location>
</feature>
<feature type="strand" evidence="7">
    <location>
        <begin position="82"/>
        <end position="91"/>
    </location>
</feature>
<feature type="helix" evidence="7">
    <location>
        <begin position="92"/>
        <end position="94"/>
    </location>
</feature>
<feature type="strand" evidence="7">
    <location>
        <begin position="96"/>
        <end position="109"/>
    </location>
</feature>
<feature type="helix" evidence="7">
    <location>
        <begin position="112"/>
        <end position="130"/>
    </location>
</feature>
<feature type="turn" evidence="7">
    <location>
        <begin position="131"/>
        <end position="133"/>
    </location>
</feature>
<feature type="strand" evidence="7">
    <location>
        <begin position="138"/>
        <end position="145"/>
    </location>
</feature>
<comment type="function">
    <text evidence="1 3">Catalyzes the conversion of (8S)-3',8-cyclo-7,8-dihydroguanosine 5'-triphosphate to cyclic pyranopterin monophosphate (cPMP).</text>
</comment>
<comment type="catalytic activity">
    <reaction evidence="1 3">
        <text>(8S)-3',8-cyclo-7,8-dihydroguanosine 5'-triphosphate = cyclic pyranopterin phosphate + diphosphate</text>
        <dbReference type="Rhea" id="RHEA:49580"/>
        <dbReference type="ChEBI" id="CHEBI:33019"/>
        <dbReference type="ChEBI" id="CHEBI:59648"/>
        <dbReference type="ChEBI" id="CHEBI:131766"/>
        <dbReference type="EC" id="4.6.1.17"/>
    </reaction>
</comment>
<comment type="biophysicochemical properties">
    <kinetics>
        <KM evidence="3">0.21 uM for (8S)-3',8-cyclo-7,8-dihydroguanosine 5'-triphosphate</KM>
        <text evidence="3">kcat is 0.56 min(-1).</text>
    </kinetics>
</comment>
<comment type="pathway">
    <text evidence="1">Cofactor biosynthesis; molybdopterin biosynthesis.</text>
</comment>
<comment type="subunit">
    <text evidence="1 3">Homohexamer; trimer of dimers.</text>
</comment>
<comment type="interaction">
    <interactant intactId="EBI-554314">
        <id>P0A738</id>
    </interactant>
    <interactant intactId="EBI-543771">
        <id>P0A7L0</id>
        <label>rplA</label>
    </interactant>
    <organismsDiffer>false</organismsDiffer>
    <experiments>2</experiments>
</comment>
<comment type="induction">
    <text>By anaerobiosis, repressed by the molybdenum cofactor.</text>
</comment>
<comment type="similarity">
    <text evidence="1">Belongs to the MoaC family.</text>
</comment>
<proteinExistence type="evidence at protein level"/>
<protein>
    <recommendedName>
        <fullName evidence="1 5">Cyclic pyranopterin monophosphate synthase</fullName>
        <ecNumber evidence="1 3">4.6.1.17</ecNumber>
    </recommendedName>
    <alternativeName>
        <fullName evidence="1">Molybdenum cofactor biosynthesis protein C</fullName>
    </alternativeName>
</protein>
<evidence type="ECO:0000255" key="1">
    <source>
        <dbReference type="HAMAP-Rule" id="MF_01224"/>
    </source>
</evidence>
<evidence type="ECO:0000269" key="2">
    <source>
    </source>
</evidence>
<evidence type="ECO:0000269" key="3">
    <source>
    </source>
</evidence>
<evidence type="ECO:0000269" key="4">
    <source>
    </source>
</evidence>
<evidence type="ECO:0000305" key="5"/>
<evidence type="ECO:0007829" key="6">
    <source>
        <dbReference type="PDB" id="1EKS"/>
    </source>
</evidence>
<evidence type="ECO:0007829" key="7">
    <source>
        <dbReference type="PDB" id="4PYA"/>
    </source>
</evidence>